<proteinExistence type="inferred from homology"/>
<protein>
    <recommendedName>
        <fullName evidence="1">Bifunctional protein FolD</fullName>
    </recommendedName>
    <domain>
        <recommendedName>
            <fullName evidence="1">Methylenetetrahydrofolate dehydrogenase</fullName>
            <ecNumber evidence="1">1.5.1.5</ecNumber>
        </recommendedName>
    </domain>
    <domain>
        <recommendedName>
            <fullName evidence="1">Methenyltetrahydrofolate cyclohydrolase</fullName>
            <ecNumber evidence="1">3.5.4.9</ecNumber>
        </recommendedName>
    </domain>
</protein>
<sequence length="311" mass="34856">MVVWIKGDRLHTETLEWARRHVKELERYGVTPKLAVLLLNDDPIELETQHKYVSLKARDIKSIGGEVELFELYKEPPEKREVAALKLIERLNNADDVTGILVQKPLPPYVDETKIFERLSPLKDVDGLTPENKKRLVTGFDLDRDILPCTPAGILELFRQYKIDVRGKDVVVVGKGTLVGFPLSIMLMQLDATVTVLHALSKDRKYYVRNADIIISAVGRPPELYSDNPWKLTGDFIKEGAVVVGVGGKVDPVTKKWYFDVDEKSVAEKASYLTPNIGGVGLATRARLVKNLIITSYMVATRVASPRLLAL</sequence>
<organism>
    <name type="scientific">Pyrobaculum islandicum (strain DSM 4184 / JCM 9189 / GEO3)</name>
    <dbReference type="NCBI Taxonomy" id="384616"/>
    <lineage>
        <taxon>Archaea</taxon>
        <taxon>Thermoproteota</taxon>
        <taxon>Thermoprotei</taxon>
        <taxon>Thermoproteales</taxon>
        <taxon>Thermoproteaceae</taxon>
        <taxon>Pyrobaculum</taxon>
    </lineage>
</organism>
<name>FOLD_PYRIL</name>
<gene>
    <name evidence="1" type="primary">folD</name>
    <name type="ordered locus">Pisl_0104</name>
</gene>
<dbReference type="EC" id="1.5.1.5" evidence="1"/>
<dbReference type="EC" id="3.5.4.9" evidence="1"/>
<dbReference type="EMBL" id="CP000504">
    <property type="protein sequence ID" value="ABL87287.1"/>
    <property type="molecule type" value="Genomic_DNA"/>
</dbReference>
<dbReference type="RefSeq" id="WP_011761864.1">
    <property type="nucleotide sequence ID" value="NC_008701.1"/>
</dbReference>
<dbReference type="SMR" id="A1RQQ5"/>
<dbReference type="STRING" id="384616.Pisl_0104"/>
<dbReference type="GeneID" id="4616943"/>
<dbReference type="KEGG" id="pis:Pisl_0104"/>
<dbReference type="eggNOG" id="arCOG04538">
    <property type="taxonomic scope" value="Archaea"/>
</dbReference>
<dbReference type="HOGENOM" id="CLU_034045_2_1_2"/>
<dbReference type="OrthoDB" id="9455at2157"/>
<dbReference type="UniPathway" id="UPA00193"/>
<dbReference type="Proteomes" id="UP000002595">
    <property type="component" value="Chromosome"/>
</dbReference>
<dbReference type="GO" id="GO:0005829">
    <property type="term" value="C:cytosol"/>
    <property type="evidence" value="ECO:0007669"/>
    <property type="project" value="TreeGrafter"/>
</dbReference>
<dbReference type="GO" id="GO:0004477">
    <property type="term" value="F:methenyltetrahydrofolate cyclohydrolase activity"/>
    <property type="evidence" value="ECO:0007669"/>
    <property type="project" value="UniProtKB-UniRule"/>
</dbReference>
<dbReference type="GO" id="GO:0004488">
    <property type="term" value="F:methylenetetrahydrofolate dehydrogenase (NADP+) activity"/>
    <property type="evidence" value="ECO:0007669"/>
    <property type="project" value="UniProtKB-UniRule"/>
</dbReference>
<dbReference type="GO" id="GO:0000105">
    <property type="term" value="P:L-histidine biosynthetic process"/>
    <property type="evidence" value="ECO:0007669"/>
    <property type="project" value="UniProtKB-KW"/>
</dbReference>
<dbReference type="GO" id="GO:0009086">
    <property type="term" value="P:methionine biosynthetic process"/>
    <property type="evidence" value="ECO:0007669"/>
    <property type="project" value="UniProtKB-KW"/>
</dbReference>
<dbReference type="GO" id="GO:0006164">
    <property type="term" value="P:purine nucleotide biosynthetic process"/>
    <property type="evidence" value="ECO:0007669"/>
    <property type="project" value="UniProtKB-KW"/>
</dbReference>
<dbReference type="GO" id="GO:0035999">
    <property type="term" value="P:tetrahydrofolate interconversion"/>
    <property type="evidence" value="ECO:0007669"/>
    <property type="project" value="UniProtKB-UniRule"/>
</dbReference>
<dbReference type="CDD" id="cd01080">
    <property type="entry name" value="NAD_bind_m-THF_DH_Cyclohyd"/>
    <property type="match status" value="1"/>
</dbReference>
<dbReference type="Gene3D" id="3.40.50.10860">
    <property type="entry name" value="Leucine Dehydrogenase, chain A, domain 1"/>
    <property type="match status" value="1"/>
</dbReference>
<dbReference type="Gene3D" id="3.40.50.720">
    <property type="entry name" value="NAD(P)-binding Rossmann-like Domain"/>
    <property type="match status" value="1"/>
</dbReference>
<dbReference type="HAMAP" id="MF_01576">
    <property type="entry name" value="THF_DHG_CYH"/>
    <property type="match status" value="1"/>
</dbReference>
<dbReference type="InterPro" id="IPR046346">
    <property type="entry name" value="Aminoacid_DH-like_N_sf"/>
</dbReference>
<dbReference type="InterPro" id="IPR036291">
    <property type="entry name" value="NAD(P)-bd_dom_sf"/>
</dbReference>
<dbReference type="InterPro" id="IPR000672">
    <property type="entry name" value="THF_DH/CycHdrlase"/>
</dbReference>
<dbReference type="InterPro" id="IPR020630">
    <property type="entry name" value="THF_DH/CycHdrlase_cat_dom"/>
</dbReference>
<dbReference type="InterPro" id="IPR020631">
    <property type="entry name" value="THF_DH/CycHdrlase_NAD-bd_dom"/>
</dbReference>
<dbReference type="PANTHER" id="PTHR48099:SF5">
    <property type="entry name" value="C-1-TETRAHYDROFOLATE SYNTHASE, CYTOPLASMIC"/>
    <property type="match status" value="1"/>
</dbReference>
<dbReference type="PANTHER" id="PTHR48099">
    <property type="entry name" value="C-1-TETRAHYDROFOLATE SYNTHASE, CYTOPLASMIC-RELATED"/>
    <property type="match status" value="1"/>
</dbReference>
<dbReference type="Pfam" id="PF00763">
    <property type="entry name" value="THF_DHG_CYH"/>
    <property type="match status" value="1"/>
</dbReference>
<dbReference type="Pfam" id="PF02882">
    <property type="entry name" value="THF_DHG_CYH_C"/>
    <property type="match status" value="1"/>
</dbReference>
<dbReference type="PRINTS" id="PR00085">
    <property type="entry name" value="THFDHDRGNASE"/>
</dbReference>
<dbReference type="SUPFAM" id="SSF53223">
    <property type="entry name" value="Aminoacid dehydrogenase-like, N-terminal domain"/>
    <property type="match status" value="1"/>
</dbReference>
<dbReference type="SUPFAM" id="SSF51735">
    <property type="entry name" value="NAD(P)-binding Rossmann-fold domains"/>
    <property type="match status" value="1"/>
</dbReference>
<evidence type="ECO:0000255" key="1">
    <source>
        <dbReference type="HAMAP-Rule" id="MF_01576"/>
    </source>
</evidence>
<keyword id="KW-0028">Amino-acid biosynthesis</keyword>
<keyword id="KW-0368">Histidine biosynthesis</keyword>
<keyword id="KW-0378">Hydrolase</keyword>
<keyword id="KW-0486">Methionine biosynthesis</keyword>
<keyword id="KW-0511">Multifunctional enzyme</keyword>
<keyword id="KW-0521">NADP</keyword>
<keyword id="KW-0554">One-carbon metabolism</keyword>
<keyword id="KW-0560">Oxidoreductase</keyword>
<keyword id="KW-0658">Purine biosynthesis</keyword>
<accession>A1RQQ5</accession>
<reference key="1">
    <citation type="submission" date="2006-12" db="EMBL/GenBank/DDBJ databases">
        <title>Complete sequence of Pyrobaculum islandicum DSM 4184.</title>
        <authorList>
            <person name="Copeland A."/>
            <person name="Lucas S."/>
            <person name="Lapidus A."/>
            <person name="Barry K."/>
            <person name="Detter J.C."/>
            <person name="Glavina del Rio T."/>
            <person name="Dalin E."/>
            <person name="Tice H."/>
            <person name="Pitluck S."/>
            <person name="Meincke L."/>
            <person name="Brettin T."/>
            <person name="Bruce D."/>
            <person name="Han C."/>
            <person name="Tapia R."/>
            <person name="Gilna P."/>
            <person name="Schmutz J."/>
            <person name="Larimer F."/>
            <person name="Land M."/>
            <person name="Hauser L."/>
            <person name="Kyrpides N."/>
            <person name="Mikhailova N."/>
            <person name="Cozen A.E."/>
            <person name="Fitz-Gibbon S.T."/>
            <person name="House C.H."/>
            <person name="Saltikov C."/>
            <person name="Lowe T."/>
            <person name="Richardson P."/>
        </authorList>
    </citation>
    <scope>NUCLEOTIDE SEQUENCE [LARGE SCALE GENOMIC DNA]</scope>
    <source>
        <strain>DSM 4184 / JCM 9189 / GEO3</strain>
    </source>
</reference>
<comment type="function">
    <text evidence="1">Catalyzes the oxidation of 5,10-methylenetetrahydrofolate to 5,10-methenyltetrahydrofolate and then the hydrolysis of 5,10-methenyltetrahydrofolate to 10-formyltetrahydrofolate.</text>
</comment>
<comment type="catalytic activity">
    <reaction evidence="1">
        <text>(6R)-5,10-methylene-5,6,7,8-tetrahydrofolate + NADP(+) = (6R)-5,10-methenyltetrahydrofolate + NADPH</text>
        <dbReference type="Rhea" id="RHEA:22812"/>
        <dbReference type="ChEBI" id="CHEBI:15636"/>
        <dbReference type="ChEBI" id="CHEBI:57455"/>
        <dbReference type="ChEBI" id="CHEBI:57783"/>
        <dbReference type="ChEBI" id="CHEBI:58349"/>
        <dbReference type="EC" id="1.5.1.5"/>
    </reaction>
</comment>
<comment type="catalytic activity">
    <reaction evidence="1">
        <text>(6R)-5,10-methenyltetrahydrofolate + H2O = (6R)-10-formyltetrahydrofolate + H(+)</text>
        <dbReference type="Rhea" id="RHEA:23700"/>
        <dbReference type="ChEBI" id="CHEBI:15377"/>
        <dbReference type="ChEBI" id="CHEBI:15378"/>
        <dbReference type="ChEBI" id="CHEBI:57455"/>
        <dbReference type="ChEBI" id="CHEBI:195366"/>
        <dbReference type="EC" id="3.5.4.9"/>
    </reaction>
</comment>
<comment type="pathway">
    <text evidence="1">One-carbon metabolism; tetrahydrofolate interconversion.</text>
</comment>
<comment type="subunit">
    <text evidence="1">Homodimer.</text>
</comment>
<comment type="similarity">
    <text evidence="1">Belongs to the tetrahydrofolate dehydrogenase/cyclohydrolase family.</text>
</comment>
<feature type="chain" id="PRO_0000305901" description="Bifunctional protein FolD">
    <location>
        <begin position="1"/>
        <end position="311"/>
    </location>
</feature>
<feature type="binding site" evidence="1">
    <location>
        <begin position="174"/>
        <end position="176"/>
    </location>
    <ligand>
        <name>NADP(+)</name>
        <dbReference type="ChEBI" id="CHEBI:58349"/>
    </ligand>
</feature>